<proteinExistence type="evidence at protein level"/>
<keyword id="KW-0090">Biological rhythms</keyword>
<keyword id="KW-1003">Cell membrane</keyword>
<keyword id="KW-0297">G-protein coupled receptor</keyword>
<keyword id="KW-0325">Glycoprotein</keyword>
<keyword id="KW-0472">Membrane</keyword>
<keyword id="KW-0675">Receptor</keyword>
<keyword id="KW-1185">Reference proteome</keyword>
<keyword id="KW-0807">Transducer</keyword>
<keyword id="KW-0812">Transmembrane</keyword>
<keyword id="KW-1133">Transmembrane helix</keyword>
<dbReference type="EMBL" id="BC052037">
    <property type="protein sequence ID" value="AAH52037.1"/>
    <property type="molecule type" value="mRNA"/>
</dbReference>
<dbReference type="EMBL" id="AY255554">
    <property type="protein sequence ID" value="AAO85066.1"/>
    <property type="molecule type" value="mRNA"/>
</dbReference>
<dbReference type="CCDS" id="CCDS16575.1"/>
<dbReference type="RefSeq" id="NP_958755.1">
    <property type="nucleotide sequence ID" value="NM_201367.3"/>
</dbReference>
<dbReference type="SMR" id="Q80WT4"/>
<dbReference type="CORUM" id="Q80WT4"/>
<dbReference type="FunCoup" id="Q80WT4">
    <property type="interactions" value="1053"/>
</dbReference>
<dbReference type="STRING" id="10090.ENSMUSP00000037586"/>
<dbReference type="GlyCosmos" id="Q80WT4">
    <property type="glycosylation" value="4 sites, No reported glycans"/>
</dbReference>
<dbReference type="GlyGen" id="Q80WT4">
    <property type="glycosylation" value="4 sites"/>
</dbReference>
<dbReference type="iPTMnet" id="Q80WT4"/>
<dbReference type="PhosphoSitePlus" id="Q80WT4"/>
<dbReference type="PaxDb" id="10090-ENSMUSP00000037586"/>
<dbReference type="ProteomicsDB" id="271426"/>
<dbReference type="Pumba" id="Q80WT4"/>
<dbReference type="Antibodypedia" id="9997">
    <property type="antibodies" value="177 antibodies from 28 providers"/>
</dbReference>
<dbReference type="DNASU" id="381413"/>
<dbReference type="Ensembl" id="ENSMUST00000039160.3">
    <property type="protein sequence ID" value="ENSMUSP00000037586.3"/>
    <property type="gene ID" value="ENSMUSG00000040133.3"/>
</dbReference>
<dbReference type="GeneID" id="381413"/>
<dbReference type="KEGG" id="mmu:381413"/>
<dbReference type="UCSC" id="uc008lru.2">
    <property type="organism name" value="mouse"/>
</dbReference>
<dbReference type="AGR" id="MGI:2685858"/>
<dbReference type="CTD" id="11245"/>
<dbReference type="MGI" id="MGI:2685858">
    <property type="gene designation" value="Gpr176"/>
</dbReference>
<dbReference type="VEuPathDB" id="HostDB:ENSMUSG00000040133"/>
<dbReference type="eggNOG" id="KOG3656">
    <property type="taxonomic scope" value="Eukaryota"/>
</dbReference>
<dbReference type="GeneTree" id="ENSGT00950000182998"/>
<dbReference type="HOGENOM" id="CLU_045778_0_0_1"/>
<dbReference type="InParanoid" id="Q80WT4"/>
<dbReference type="OMA" id="VTDIYAM"/>
<dbReference type="OrthoDB" id="9339792at2759"/>
<dbReference type="PhylomeDB" id="Q80WT4"/>
<dbReference type="TreeFam" id="TF331506"/>
<dbReference type="Reactome" id="R-MMU-418555">
    <property type="pathway name" value="G alpha (s) signalling events"/>
</dbReference>
<dbReference type="BioGRID-ORCS" id="381413">
    <property type="hits" value="3 hits in 79 CRISPR screens"/>
</dbReference>
<dbReference type="ChiTaRS" id="Gpr176">
    <property type="organism name" value="mouse"/>
</dbReference>
<dbReference type="PRO" id="PR:Q80WT4"/>
<dbReference type="Proteomes" id="UP000000589">
    <property type="component" value="Chromosome 2"/>
</dbReference>
<dbReference type="RNAct" id="Q80WT4">
    <property type="molecule type" value="protein"/>
</dbReference>
<dbReference type="Bgee" id="ENSMUSG00000040133">
    <property type="expression patterns" value="Expressed in vault of skull and 123 other cell types or tissues"/>
</dbReference>
<dbReference type="GO" id="GO:0005886">
    <property type="term" value="C:plasma membrane"/>
    <property type="evidence" value="ECO:0000314"/>
    <property type="project" value="UniProtKB"/>
</dbReference>
<dbReference type="GO" id="GO:0004930">
    <property type="term" value="F:G protein-coupled receptor activity"/>
    <property type="evidence" value="ECO:0000314"/>
    <property type="project" value="UniProtKB"/>
</dbReference>
<dbReference type="GO" id="GO:0007193">
    <property type="term" value="P:adenylate cyclase-inhibiting G protein-coupled receptor signaling pathway"/>
    <property type="evidence" value="ECO:0000315"/>
    <property type="project" value="MGI"/>
</dbReference>
<dbReference type="GO" id="GO:0048512">
    <property type="term" value="P:circadian behavior"/>
    <property type="evidence" value="ECO:0000315"/>
    <property type="project" value="UniProtKB"/>
</dbReference>
<dbReference type="GO" id="GO:0007186">
    <property type="term" value="P:G protein-coupled receptor signaling pathway"/>
    <property type="evidence" value="ECO:0000315"/>
    <property type="project" value="UniProtKB"/>
</dbReference>
<dbReference type="CDD" id="cd15006">
    <property type="entry name" value="7tmA_GPR176"/>
    <property type="match status" value="1"/>
</dbReference>
<dbReference type="FunFam" id="1.20.1070.10:FF:000220">
    <property type="entry name" value="Probable G-protein coupled receptor 176"/>
    <property type="match status" value="1"/>
</dbReference>
<dbReference type="Gene3D" id="1.20.1070.10">
    <property type="entry name" value="Rhodopsin 7-helix transmembrane proteins"/>
    <property type="match status" value="1"/>
</dbReference>
<dbReference type="InterPro" id="IPR043523">
    <property type="entry name" value="GPCR_176_Rhodpsn_7TM"/>
</dbReference>
<dbReference type="InterPro" id="IPR000276">
    <property type="entry name" value="GPCR_Rhodpsn"/>
</dbReference>
<dbReference type="InterPro" id="IPR017452">
    <property type="entry name" value="GPCR_Rhodpsn_7TM"/>
</dbReference>
<dbReference type="PANTHER" id="PTHR22752">
    <property type="entry name" value="G PROTEIN-COUPLED RECEPTOR"/>
    <property type="match status" value="1"/>
</dbReference>
<dbReference type="PANTHER" id="PTHR22752:SF1">
    <property type="entry name" value="G-PROTEIN COUPLED RECEPTOR 176"/>
    <property type="match status" value="1"/>
</dbReference>
<dbReference type="Pfam" id="PF00001">
    <property type="entry name" value="7tm_1"/>
    <property type="match status" value="1"/>
</dbReference>
<dbReference type="PRINTS" id="PR00237">
    <property type="entry name" value="GPCRRHODOPSN"/>
</dbReference>
<dbReference type="SUPFAM" id="SSF81321">
    <property type="entry name" value="Family A G protein-coupled receptor-like"/>
    <property type="match status" value="1"/>
</dbReference>
<dbReference type="PROSITE" id="PS50262">
    <property type="entry name" value="G_PROTEIN_RECEP_F1_2"/>
    <property type="match status" value="1"/>
</dbReference>
<gene>
    <name type="primary">Gpr176</name>
    <name type="synonym">Agr9</name>
    <name type="synonym">Gm1012</name>
</gene>
<comment type="function">
    <text evidence="4">Orphan receptor involved in normal circadian rhythm behavior (PubMed:26882873). Acts through the G-protein subclass G(z)-alpha and has an agonist-independent basal activity to repress cAMP production (PubMed:26882873).</text>
</comment>
<comment type="subcellular location">
    <subcellularLocation>
        <location evidence="4">Cell membrane</location>
        <topology evidence="1">Multi-pass membrane protein</topology>
    </subcellularLocation>
</comment>
<comment type="tissue specificity">
    <text evidence="4">Expressed mainly in the brain, with prominent expression in the SCN (at protein level) (PubMed:26882873).</text>
</comment>
<comment type="developmental stage">
    <text evidence="4">Fluctuates in a circadian fashion, with highest level in night and lowest in the morning (at protein level).</text>
</comment>
<comment type="disruption phenotype">
    <text evidence="4">Deficient mice exhibit a significantly shorter circadian period.</text>
</comment>
<comment type="similarity">
    <text evidence="2">Belongs to the G-protein coupled receptor 1 family.</text>
</comment>
<protein>
    <recommendedName>
        <fullName>G-protein coupled receptor 176</fullName>
    </recommendedName>
    <alternativeName>
        <fullName>G-protein coupled receptor AGR9</fullName>
    </alternativeName>
</protein>
<organism>
    <name type="scientific">Mus musculus</name>
    <name type="common">Mouse</name>
    <dbReference type="NCBI Taxonomy" id="10090"/>
    <lineage>
        <taxon>Eukaryota</taxon>
        <taxon>Metazoa</taxon>
        <taxon>Chordata</taxon>
        <taxon>Craniata</taxon>
        <taxon>Vertebrata</taxon>
        <taxon>Euteleostomi</taxon>
        <taxon>Mammalia</taxon>
        <taxon>Eutheria</taxon>
        <taxon>Euarchontoglires</taxon>
        <taxon>Glires</taxon>
        <taxon>Rodentia</taxon>
        <taxon>Myomorpha</taxon>
        <taxon>Muroidea</taxon>
        <taxon>Muridae</taxon>
        <taxon>Murinae</taxon>
        <taxon>Mus</taxon>
        <taxon>Mus</taxon>
    </lineage>
</organism>
<sequence>MGHNSSWVSPNTSHPRNTSGAEAGANLSAFGELSEAQLYRQFTTTVQVVIFIGSLLGNFMVLWSTCRTTVFKSVTNRFIKNLACSGICASVVCVPFDIILSSSPHCCWWIYTMLFCKVLKFLHKVFCSVTVLSFPAIALDRYYSVLYPLERKISDAKSRELVMYIWAHAVVASVPVFAVTNVADIYAMSTCTEVWSNSLGHLVYVLIYNVTTVIVPVAVVFLFLILIRRALSASQKKKVIIAALRTPQNTISIPYASQREAELHATLLSMVTVFILCSVPYATLVVYQTVLNVPNTSVFLLLTAIWLPKVSLLANPVLFLTVNKSVRKCLVGTLVQLHHRYSRRNVVSTGSGVAEPSLEPSMRSGSQLLEMFHIGQQQIFKPSEDEEESEAKYLGSADFQAKEVLTSCPEGEQEPPQLAPSVPPPGTVDSEPRVSPVAPMESGIFPDKYSLQFGFGPFELPPQWLSETRNSKKRLLPPLGNTPEELIQTKVPRVNRVERKMSRNNKVSIFPKVDS</sequence>
<name>GP176_MOUSE</name>
<feature type="chain" id="PRO_0000069657" description="G-protein coupled receptor 176">
    <location>
        <begin position="1"/>
        <end position="515"/>
    </location>
</feature>
<feature type="topological domain" description="Extracellular" evidence="1">
    <location>
        <begin position="1"/>
        <end position="41"/>
    </location>
</feature>
<feature type="transmembrane region" description="Helical; Name=1" evidence="1">
    <location>
        <begin position="42"/>
        <end position="64"/>
    </location>
</feature>
<feature type="topological domain" description="Cytoplasmic" evidence="5">
    <location>
        <begin position="65"/>
        <end position="77"/>
    </location>
</feature>
<feature type="transmembrane region" description="Helical; Name=2" evidence="1">
    <location>
        <begin position="78"/>
        <end position="98"/>
    </location>
</feature>
<feature type="topological domain" description="Extracellular" evidence="5">
    <location>
        <begin position="99"/>
        <end position="108"/>
    </location>
</feature>
<feature type="transmembrane region" description="Helical; Name=3" evidence="1">
    <location>
        <begin position="109"/>
        <end position="129"/>
    </location>
</feature>
<feature type="topological domain" description="Cytoplasmic" evidence="5">
    <location>
        <begin position="130"/>
        <end position="157"/>
    </location>
</feature>
<feature type="transmembrane region" description="Helical; Name=4" evidence="1">
    <location>
        <begin position="158"/>
        <end position="177"/>
    </location>
</feature>
<feature type="topological domain" description="Extracellular" evidence="5">
    <location>
        <begin position="178"/>
        <end position="204"/>
    </location>
</feature>
<feature type="transmembrane region" description="Helical; Name=5" evidence="1">
    <location>
        <begin position="205"/>
        <end position="225"/>
    </location>
</feature>
<feature type="topological domain" description="Cytoplasmic" evidence="5">
    <location>
        <begin position="226"/>
        <end position="264"/>
    </location>
</feature>
<feature type="transmembrane region" description="Helical; Name=6" evidence="1">
    <location>
        <begin position="265"/>
        <end position="285"/>
    </location>
</feature>
<feature type="topological domain" description="Extracellular" evidence="5">
    <location>
        <begin position="286"/>
        <end position="301"/>
    </location>
</feature>
<feature type="transmembrane region" description="Helical; Name=7" evidence="1">
    <location>
        <begin position="302"/>
        <end position="322"/>
    </location>
</feature>
<feature type="topological domain" description="Cytoplasmic" evidence="5">
    <location>
        <begin position="323"/>
        <end position="515"/>
    </location>
</feature>
<feature type="region of interest" description="Disordered" evidence="3">
    <location>
        <begin position="407"/>
        <end position="435"/>
    </location>
</feature>
<feature type="compositionally biased region" description="Pro residues" evidence="3">
    <location>
        <begin position="417"/>
        <end position="426"/>
    </location>
</feature>
<feature type="glycosylation site" description="N-linked (GlcNAc...) asparagine" evidence="1">
    <location>
        <position position="4"/>
    </location>
</feature>
<feature type="glycosylation site" description="N-linked (GlcNAc...) asparagine" evidence="1">
    <location>
        <position position="11"/>
    </location>
</feature>
<feature type="glycosylation site" description="N-linked (GlcNAc...) asparagine" evidence="1">
    <location>
        <position position="17"/>
    </location>
</feature>
<feature type="glycosylation site" description="N-linked (GlcNAc...) asparagine" evidence="1">
    <location>
        <position position="26"/>
    </location>
</feature>
<feature type="mutagenesis site" description="Decreases expression; No reduction of cAMP upon induction." evidence="4">
    <original>DR</original>
    <variation>RD</variation>
    <location>
        <begin position="140"/>
        <end position="141"/>
    </location>
</feature>
<feature type="mutagenesis site" description="No reduction of cAMP upon induction." evidence="4">
    <original>V</original>
    <variation>R</variation>
    <location>
        <position position="145"/>
    </location>
</feature>
<accession>Q80WT4</accession>
<accession>Q80UC4</accession>
<evidence type="ECO:0000255" key="1"/>
<evidence type="ECO:0000255" key="2">
    <source>
        <dbReference type="PROSITE-ProRule" id="PRU00521"/>
    </source>
</evidence>
<evidence type="ECO:0000256" key="3">
    <source>
        <dbReference type="SAM" id="MobiDB-lite"/>
    </source>
</evidence>
<evidence type="ECO:0000269" key="4">
    <source>
    </source>
</evidence>
<evidence type="ECO:0000305" key="5"/>
<reference key="1">
    <citation type="journal article" date="2004" name="Genome Res.">
        <title>The status, quality, and expansion of the NIH full-length cDNA project: the Mammalian Gene Collection (MGC).</title>
        <authorList>
            <consortium name="The MGC Project Team"/>
        </authorList>
    </citation>
    <scope>NUCLEOTIDE SEQUENCE [LARGE SCALE MRNA]</scope>
    <source>
        <strain>C57BL/6J</strain>
        <tissue>Brain</tissue>
    </source>
</reference>
<reference key="2">
    <citation type="journal article" date="2003" name="Proc. Natl. Acad. Sci. U.S.A.">
        <title>The G protein-coupled receptor repertoires of human and mouse.</title>
        <authorList>
            <person name="Vassilatis D.K."/>
            <person name="Hohmann J.G."/>
            <person name="Zeng H."/>
            <person name="Li F."/>
            <person name="Ranchalis J.E."/>
            <person name="Mortrud M.T."/>
            <person name="Brown A."/>
            <person name="Rodriguez S.S."/>
            <person name="Weller J.R."/>
            <person name="Wright A.C."/>
            <person name="Bergmann J.E."/>
            <person name="Gaitanaris G.A."/>
        </authorList>
    </citation>
    <scope>NUCLEOTIDE SEQUENCE [LARGE SCALE MRNA] OF 84-261</scope>
</reference>
<reference key="3">
    <citation type="journal article" date="2016" name="Nat. Commun.">
        <title>Gpr176 is a Gz-linked orphan G-protein-coupled receptor that sets the pace of circadian behaviour.</title>
        <authorList>
            <person name="Doi M."/>
            <person name="Murai I."/>
            <person name="Kunisue S."/>
            <person name="Setsu G."/>
            <person name="Uchio N."/>
            <person name="Tanaka R."/>
            <person name="Kobayashi S."/>
            <person name="Shimatani H."/>
            <person name="Hayashi H."/>
            <person name="Chao H.W."/>
            <person name="Nakagawa Y."/>
            <person name="Takahashi Y."/>
            <person name="Hotta Y."/>
            <person name="Yasunaga J."/>
            <person name="Matsuoka M."/>
            <person name="Hastings M.H."/>
            <person name="Kiyonari H."/>
            <person name="Okamura H."/>
        </authorList>
    </citation>
    <scope>FUNCTION</scope>
    <scope>TISSUE SPECIFICITY</scope>
    <scope>DEVELOPMENTAL STAGE</scope>
    <scope>DISRUPTION PHENOTYPE</scope>
    <scope>SUBCELLULAR LOCATION</scope>
    <scope>MUTAGENESIS OF 140-ASP-ARG-141 AND VAL-145</scope>
</reference>